<sequence length="435" mass="48489">MSQKPHLNLIVIGHIDHGKSTLVGRLLMDRGFIDEKTVKEAEEAAKKLGKESEKFAFLLDRLKEERERGVTINLTFMRFETKKYFFTIIDAPGHRDFVKNMITGASQADAAILVVSAKKGEYEAGMSVEGQTREHIILAKTMGLDQLIVAVNKMDLTEPPYDEKRYKEIVDQVSKFMRSYGFNTNKVRFVPVVAPAGDNITHRSENMKWYNGPTLEEYLDQLELPPKPVDKPLRIPIQDVYSISGVGTVPVGRVESGVLKVGDKIVFMPAGKVGEVRSIETHHTKMDKAEPGDNIGFNVRGVEKKDIKRGDVVGHPNNPPTVADEFTARIIVVWHPTALANGYTPVIHVHTASVACRVSELVSKLDPRTGQEAEKNPQFLKQGDVAIVKFKPIKPLCVEKYNEFPPLGRFAMRDMGKTVGVGIIVDVKPAKVEIK</sequence>
<dbReference type="EC" id="3.6.5.3" evidence="2"/>
<dbReference type="EMBL" id="X70701">
    <property type="protein sequence ID" value="CAA50033.1"/>
    <property type="molecule type" value="Genomic_DNA"/>
</dbReference>
<dbReference type="EMBL" id="X76767">
    <property type="protein sequence ID" value="CAA54162.1"/>
    <property type="molecule type" value="Genomic_DNA"/>
</dbReference>
<dbReference type="EMBL" id="AJ312397">
    <property type="protein sequence ID" value="CAC42886.1"/>
    <property type="molecule type" value="Genomic_DNA"/>
</dbReference>
<dbReference type="EMBL" id="AE006641">
    <property type="protein sequence ID" value="AAK40559.1"/>
    <property type="molecule type" value="Genomic_DNA"/>
</dbReference>
<dbReference type="PIR" id="H90162">
    <property type="entry name" value="H90162"/>
</dbReference>
<dbReference type="PIR" id="S43507">
    <property type="entry name" value="S43507"/>
</dbReference>
<dbReference type="RefSeq" id="WP_010922916.1">
    <property type="nucleotide sequence ID" value="NC_002754.1"/>
</dbReference>
<dbReference type="PDB" id="1JNY">
    <property type="method" value="X-ray"/>
    <property type="resolution" value="1.80 A"/>
    <property type="chains" value="A/B=1-435"/>
</dbReference>
<dbReference type="PDB" id="1SKQ">
    <property type="method" value="X-ray"/>
    <property type="resolution" value="1.80 A"/>
    <property type="chains" value="A/B=1-435"/>
</dbReference>
<dbReference type="PDBsum" id="1JNY"/>
<dbReference type="PDBsum" id="1SKQ"/>
<dbReference type="SMR" id="P35021"/>
<dbReference type="FunCoup" id="P35021">
    <property type="interactions" value="131"/>
</dbReference>
<dbReference type="STRING" id="273057.SSO0216"/>
<dbReference type="PaxDb" id="273057-SSO0216"/>
<dbReference type="EnsemblBacteria" id="AAK40559">
    <property type="protein sequence ID" value="AAK40559"/>
    <property type="gene ID" value="SSO0216"/>
</dbReference>
<dbReference type="GeneID" id="1455369"/>
<dbReference type="GeneID" id="27426513"/>
<dbReference type="KEGG" id="sso:SSO0216"/>
<dbReference type="PATRIC" id="fig|273057.12.peg.214"/>
<dbReference type="eggNOG" id="arCOG01561">
    <property type="taxonomic scope" value="Archaea"/>
</dbReference>
<dbReference type="HOGENOM" id="CLU_007265_3_5_2"/>
<dbReference type="InParanoid" id="P35021"/>
<dbReference type="PhylomeDB" id="P35021"/>
<dbReference type="BRENDA" id="3.6.5.3">
    <property type="organism ID" value="6163"/>
</dbReference>
<dbReference type="EvolutionaryTrace" id="P35021"/>
<dbReference type="Proteomes" id="UP000001974">
    <property type="component" value="Chromosome"/>
</dbReference>
<dbReference type="GO" id="GO:0005737">
    <property type="term" value="C:cytoplasm"/>
    <property type="evidence" value="ECO:0007669"/>
    <property type="project" value="UniProtKB-SubCell"/>
</dbReference>
<dbReference type="GO" id="GO:0005525">
    <property type="term" value="F:GTP binding"/>
    <property type="evidence" value="ECO:0007669"/>
    <property type="project" value="UniProtKB-UniRule"/>
</dbReference>
<dbReference type="GO" id="GO:0003924">
    <property type="term" value="F:GTPase activity"/>
    <property type="evidence" value="ECO:0007669"/>
    <property type="project" value="InterPro"/>
</dbReference>
<dbReference type="GO" id="GO:0003746">
    <property type="term" value="F:translation elongation factor activity"/>
    <property type="evidence" value="ECO:0007669"/>
    <property type="project" value="UniProtKB-UniRule"/>
</dbReference>
<dbReference type="CDD" id="cd01883">
    <property type="entry name" value="EF1_alpha"/>
    <property type="match status" value="1"/>
</dbReference>
<dbReference type="CDD" id="cd03693">
    <property type="entry name" value="EF1_alpha_II"/>
    <property type="match status" value="1"/>
</dbReference>
<dbReference type="CDD" id="cd03705">
    <property type="entry name" value="EF1_alpha_III"/>
    <property type="match status" value="1"/>
</dbReference>
<dbReference type="FunFam" id="2.40.30.10:FF:000003">
    <property type="entry name" value="Elongation factor 1-alpha"/>
    <property type="match status" value="1"/>
</dbReference>
<dbReference type="FunFam" id="2.40.30.10:FF:000005">
    <property type="entry name" value="Elongation factor 1-alpha"/>
    <property type="match status" value="1"/>
</dbReference>
<dbReference type="FunFam" id="3.40.50.300:FF:000255">
    <property type="entry name" value="Elongation factor 1-alpha"/>
    <property type="match status" value="1"/>
</dbReference>
<dbReference type="Gene3D" id="3.40.50.300">
    <property type="entry name" value="P-loop containing nucleotide triphosphate hydrolases"/>
    <property type="match status" value="1"/>
</dbReference>
<dbReference type="Gene3D" id="2.40.30.10">
    <property type="entry name" value="Translation factors"/>
    <property type="match status" value="2"/>
</dbReference>
<dbReference type="HAMAP" id="MF_00118_A">
    <property type="entry name" value="EF_Tu_A"/>
    <property type="match status" value="1"/>
</dbReference>
<dbReference type="InterPro" id="IPR004161">
    <property type="entry name" value="EFTu-like_2"/>
</dbReference>
<dbReference type="InterPro" id="IPR031157">
    <property type="entry name" value="G_TR_CS"/>
</dbReference>
<dbReference type="InterPro" id="IPR054696">
    <property type="entry name" value="GTP-eEF1A_C"/>
</dbReference>
<dbReference type="InterPro" id="IPR027417">
    <property type="entry name" value="P-loop_NTPase"/>
</dbReference>
<dbReference type="InterPro" id="IPR005225">
    <property type="entry name" value="Small_GTP-bd"/>
</dbReference>
<dbReference type="InterPro" id="IPR000795">
    <property type="entry name" value="T_Tr_GTP-bd_dom"/>
</dbReference>
<dbReference type="InterPro" id="IPR050100">
    <property type="entry name" value="TRAFAC_GTPase_members"/>
</dbReference>
<dbReference type="InterPro" id="IPR009000">
    <property type="entry name" value="Transl_B-barrel_sf"/>
</dbReference>
<dbReference type="InterPro" id="IPR009001">
    <property type="entry name" value="Transl_elong_EF1A/Init_IF2_C"/>
</dbReference>
<dbReference type="InterPro" id="IPR004539">
    <property type="entry name" value="Transl_elong_EF1A_euk/arc"/>
</dbReference>
<dbReference type="NCBIfam" id="TIGR00483">
    <property type="entry name" value="EF-1_alpha"/>
    <property type="match status" value="1"/>
</dbReference>
<dbReference type="NCBIfam" id="NF008969">
    <property type="entry name" value="PRK12317.1"/>
    <property type="match status" value="1"/>
</dbReference>
<dbReference type="NCBIfam" id="TIGR00231">
    <property type="entry name" value="small_GTP"/>
    <property type="match status" value="1"/>
</dbReference>
<dbReference type="PANTHER" id="PTHR23115">
    <property type="entry name" value="TRANSLATION FACTOR"/>
    <property type="match status" value="1"/>
</dbReference>
<dbReference type="Pfam" id="PF22594">
    <property type="entry name" value="GTP-eEF1A_C"/>
    <property type="match status" value="1"/>
</dbReference>
<dbReference type="Pfam" id="PF00009">
    <property type="entry name" value="GTP_EFTU"/>
    <property type="match status" value="1"/>
</dbReference>
<dbReference type="Pfam" id="PF03144">
    <property type="entry name" value="GTP_EFTU_D2"/>
    <property type="match status" value="1"/>
</dbReference>
<dbReference type="PRINTS" id="PR00315">
    <property type="entry name" value="ELONGATNFCT"/>
</dbReference>
<dbReference type="SUPFAM" id="SSF50465">
    <property type="entry name" value="EF-Tu/eEF-1alpha/eIF2-gamma C-terminal domain"/>
    <property type="match status" value="1"/>
</dbReference>
<dbReference type="SUPFAM" id="SSF52540">
    <property type="entry name" value="P-loop containing nucleoside triphosphate hydrolases"/>
    <property type="match status" value="1"/>
</dbReference>
<dbReference type="SUPFAM" id="SSF50447">
    <property type="entry name" value="Translation proteins"/>
    <property type="match status" value="1"/>
</dbReference>
<dbReference type="PROSITE" id="PS00301">
    <property type="entry name" value="G_TR_1"/>
    <property type="match status" value="1"/>
</dbReference>
<dbReference type="PROSITE" id="PS51722">
    <property type="entry name" value="G_TR_2"/>
    <property type="match status" value="1"/>
</dbReference>
<feature type="chain" id="PRO_0000090994" description="Elongation factor 1-alpha">
    <location>
        <begin position="1"/>
        <end position="435"/>
    </location>
</feature>
<feature type="domain" description="tr-type G">
    <location>
        <begin position="4"/>
        <end position="227"/>
    </location>
</feature>
<feature type="region of interest" description="G1" evidence="1">
    <location>
        <begin position="13"/>
        <end position="20"/>
    </location>
</feature>
<feature type="region of interest" description="G2" evidence="1">
    <location>
        <begin position="69"/>
        <end position="73"/>
    </location>
</feature>
<feature type="region of interest" description="G3" evidence="1">
    <location>
        <begin position="90"/>
        <end position="93"/>
    </location>
</feature>
<feature type="region of interest" description="G4" evidence="1">
    <location>
        <begin position="152"/>
        <end position="155"/>
    </location>
</feature>
<feature type="region of interest" description="G5" evidence="1">
    <location>
        <begin position="193"/>
        <end position="195"/>
    </location>
</feature>
<feature type="binding site" evidence="2">
    <location>
        <begin position="13"/>
        <end position="20"/>
    </location>
    <ligand>
        <name>GTP</name>
        <dbReference type="ChEBI" id="CHEBI:37565"/>
    </ligand>
</feature>
<feature type="binding site" evidence="2">
    <location>
        <position position="20"/>
    </location>
    <ligand>
        <name>Mg(2+)</name>
        <dbReference type="ChEBI" id="CHEBI:18420"/>
    </ligand>
</feature>
<feature type="binding site" evidence="2">
    <location>
        <begin position="90"/>
        <end position="94"/>
    </location>
    <ligand>
        <name>GTP</name>
        <dbReference type="ChEBI" id="CHEBI:37565"/>
    </ligand>
</feature>
<feature type="binding site" evidence="2">
    <location>
        <begin position="152"/>
        <end position="155"/>
    </location>
    <ligand>
        <name>GTP</name>
        <dbReference type="ChEBI" id="CHEBI:37565"/>
    </ligand>
</feature>
<feature type="sequence variant" description="In strain: MT-3 and MT-4.">
    <original>A</original>
    <variation>S</variation>
    <location>
        <position position="196"/>
    </location>
</feature>
<feature type="sequence variant" description="In strain: MT-3 and MT-4.">
    <original>R</original>
    <variation>K</variation>
    <location>
        <position position="203"/>
    </location>
</feature>
<feature type="sequence variant" description="In strain: MT-3 and MT-4.">
    <original>I</original>
    <variation>L</variation>
    <location>
        <position position="347"/>
    </location>
</feature>
<feature type="sequence conflict" description="In Ref. 1." evidence="3" ref="1">
    <original>H</original>
    <variation>Q</variation>
    <location>
        <position position="14"/>
    </location>
</feature>
<feature type="sequence conflict" description="In Ref. 1 and 2." evidence="3" ref="1 2">
    <original>V</original>
    <variation>R</variation>
    <location>
        <position position="240"/>
    </location>
</feature>
<feature type="strand" evidence="4">
    <location>
        <begin position="6"/>
        <end position="14"/>
    </location>
</feature>
<feature type="helix" evidence="4">
    <location>
        <begin position="19"/>
        <end position="30"/>
    </location>
</feature>
<feature type="helix" evidence="4">
    <location>
        <begin position="35"/>
        <end position="48"/>
    </location>
</feature>
<feature type="helix" evidence="4">
    <location>
        <begin position="52"/>
        <end position="64"/>
    </location>
</feature>
<feature type="strand" evidence="4">
    <location>
        <begin position="78"/>
        <end position="80"/>
    </location>
</feature>
<feature type="strand" evidence="4">
    <location>
        <begin position="85"/>
        <end position="88"/>
    </location>
</feature>
<feature type="strand" evidence="4">
    <location>
        <begin position="92"/>
        <end position="94"/>
    </location>
</feature>
<feature type="helix" evidence="4">
    <location>
        <begin position="97"/>
        <end position="102"/>
    </location>
</feature>
<feature type="strand" evidence="5">
    <location>
        <begin position="104"/>
        <end position="106"/>
    </location>
</feature>
<feature type="strand" evidence="4">
    <location>
        <begin position="109"/>
        <end position="116"/>
    </location>
</feature>
<feature type="helix" evidence="4">
    <location>
        <begin position="121"/>
        <end position="126"/>
    </location>
</feature>
<feature type="helix" evidence="4">
    <location>
        <begin position="131"/>
        <end position="141"/>
    </location>
</feature>
<feature type="strand" evidence="4">
    <location>
        <begin position="148"/>
        <end position="152"/>
    </location>
</feature>
<feature type="helix" evidence="4">
    <location>
        <begin position="154"/>
        <end position="156"/>
    </location>
</feature>
<feature type="strand" evidence="4">
    <location>
        <begin position="157"/>
        <end position="159"/>
    </location>
</feature>
<feature type="helix" evidence="4">
    <location>
        <begin position="163"/>
        <end position="179"/>
    </location>
</feature>
<feature type="strand" evidence="4">
    <location>
        <begin position="188"/>
        <end position="191"/>
    </location>
</feature>
<feature type="turn" evidence="4">
    <location>
        <begin position="194"/>
        <end position="197"/>
    </location>
</feature>
<feature type="helix" evidence="4">
    <location>
        <begin position="215"/>
        <end position="219"/>
    </location>
</feature>
<feature type="helix" evidence="4">
    <location>
        <begin position="228"/>
        <end position="230"/>
    </location>
</feature>
<feature type="strand" evidence="4">
    <location>
        <begin position="234"/>
        <end position="243"/>
    </location>
</feature>
<feature type="turn" evidence="4">
    <location>
        <begin position="244"/>
        <end position="246"/>
    </location>
</feature>
<feature type="strand" evidence="4">
    <location>
        <begin position="247"/>
        <end position="253"/>
    </location>
</feature>
<feature type="strand" evidence="4">
    <location>
        <begin position="264"/>
        <end position="268"/>
    </location>
</feature>
<feature type="turn" evidence="4">
    <location>
        <begin position="269"/>
        <end position="271"/>
    </location>
</feature>
<feature type="strand" evidence="4">
    <location>
        <begin position="272"/>
        <end position="281"/>
    </location>
</feature>
<feature type="strand" evidence="4">
    <location>
        <begin position="284"/>
        <end position="289"/>
    </location>
</feature>
<feature type="strand" evidence="4">
    <location>
        <begin position="294"/>
        <end position="302"/>
    </location>
</feature>
<feature type="helix" evidence="4">
    <location>
        <begin position="304"/>
        <end position="306"/>
    </location>
</feature>
<feature type="strand" evidence="4">
    <location>
        <begin position="312"/>
        <end position="314"/>
    </location>
</feature>
<feature type="strand" evidence="4">
    <location>
        <begin position="322"/>
        <end position="332"/>
    </location>
</feature>
<feature type="strand" evidence="4">
    <location>
        <begin position="346"/>
        <end position="349"/>
    </location>
</feature>
<feature type="strand" evidence="4">
    <location>
        <begin position="352"/>
        <end position="365"/>
    </location>
</feature>
<feature type="turn" evidence="4">
    <location>
        <begin position="367"/>
        <end position="369"/>
    </location>
</feature>
<feature type="strand" evidence="4">
    <location>
        <begin position="371"/>
        <end position="376"/>
    </location>
</feature>
<feature type="strand" evidence="5">
    <location>
        <begin position="378"/>
        <end position="380"/>
    </location>
</feature>
<feature type="strand" evidence="4">
    <location>
        <begin position="385"/>
        <end position="394"/>
    </location>
</feature>
<feature type="turn" evidence="4">
    <location>
        <begin position="401"/>
        <end position="403"/>
    </location>
</feature>
<feature type="helix" evidence="4">
    <location>
        <begin position="405"/>
        <end position="407"/>
    </location>
</feature>
<feature type="strand" evidence="4">
    <location>
        <begin position="409"/>
        <end position="414"/>
    </location>
</feature>
<feature type="strand" evidence="4">
    <location>
        <begin position="417"/>
        <end position="428"/>
    </location>
</feature>
<keyword id="KW-0002">3D-structure</keyword>
<keyword id="KW-0963">Cytoplasm</keyword>
<keyword id="KW-0251">Elongation factor</keyword>
<keyword id="KW-0342">GTP-binding</keyword>
<keyword id="KW-0378">Hydrolase</keyword>
<keyword id="KW-0460">Magnesium</keyword>
<keyword id="KW-0479">Metal-binding</keyword>
<keyword id="KW-0547">Nucleotide-binding</keyword>
<keyword id="KW-0648">Protein biosynthesis</keyword>
<keyword id="KW-1185">Reference proteome</keyword>
<organism>
    <name type="scientific">Saccharolobus solfataricus (strain ATCC 35092 / DSM 1617 / JCM 11322 / P2)</name>
    <name type="common">Sulfolobus solfataricus</name>
    <dbReference type="NCBI Taxonomy" id="273057"/>
    <lineage>
        <taxon>Archaea</taxon>
        <taxon>Thermoproteota</taxon>
        <taxon>Thermoprotei</taxon>
        <taxon>Sulfolobales</taxon>
        <taxon>Sulfolobaceae</taxon>
        <taxon>Saccharolobus</taxon>
    </lineage>
</organism>
<name>EF1A_SACS2</name>
<evidence type="ECO:0000250" key="1"/>
<evidence type="ECO:0000255" key="2">
    <source>
        <dbReference type="HAMAP-Rule" id="MF_00118"/>
    </source>
</evidence>
<evidence type="ECO:0000305" key="3"/>
<evidence type="ECO:0007829" key="4">
    <source>
        <dbReference type="PDB" id="1JNY"/>
    </source>
</evidence>
<evidence type="ECO:0007829" key="5">
    <source>
        <dbReference type="PDB" id="1SKQ"/>
    </source>
</evidence>
<reference key="1">
    <citation type="journal article" date="1993" name="Nucleic Acids Res.">
        <title>Primary structure of the elongation factor 1 alpha in Sulfolobus solfataricus.</title>
        <authorList>
            <person name="Arcari P."/>
            <person name="Gallo M."/>
            <person name="Ianniciello G."/>
            <person name="Dello Russo A."/>
            <person name="Bocchini V."/>
        </authorList>
    </citation>
    <scope>NUCLEOTIDE SEQUENCE [GENOMIC DNA]</scope>
    <source>
        <strain>DSM 5833 / MT-4</strain>
    </source>
</reference>
<reference key="2">
    <citation type="journal article" date="1994" name="Biochim. Biophys. Acta">
        <title>The nucleotide sequence of the gene coding for the elongation factor 1 alpha in Sulfolobus solfataricus. Homology of the product with related proteins.</title>
        <authorList>
            <person name="Arcari P."/>
            <person name="Gallo M."/>
            <person name="Ianniciello G."/>
            <person name="Dello Russo A."/>
            <person name="Bocchini V."/>
        </authorList>
    </citation>
    <scope>NUCLEOTIDE SEQUENCE [GENOMIC DNA]</scope>
    <source>
        <strain>DSM 5833 / MT-4</strain>
    </source>
</reference>
<reference key="3">
    <citation type="submission" date="2001-06" db="EMBL/GenBank/DDBJ databases">
        <title>The nucleotide sequence of the gene encoding the elongation factor 1 alpha from the archaeon Sulfolobus solfataricus isolate MT3.</title>
        <authorList>
            <person name="Arcari P."/>
            <person name="Masullo M."/>
            <person name="Bocchini V."/>
        </authorList>
    </citation>
    <scope>NUCLEOTIDE SEQUENCE [GENOMIC DNA]</scope>
    <source>
        <strain>MT-3</strain>
    </source>
</reference>
<reference key="4">
    <citation type="journal article" date="2001" name="Proc. Natl. Acad. Sci. U.S.A.">
        <title>The complete genome of the crenarchaeon Sulfolobus solfataricus P2.</title>
        <authorList>
            <person name="She Q."/>
            <person name="Singh R.K."/>
            <person name="Confalonieri F."/>
            <person name="Zivanovic Y."/>
            <person name="Allard G."/>
            <person name="Awayez M.J."/>
            <person name="Chan-Weiher C.C.-Y."/>
            <person name="Clausen I.G."/>
            <person name="Curtis B.A."/>
            <person name="De Moors A."/>
            <person name="Erauso G."/>
            <person name="Fletcher C."/>
            <person name="Gordon P.M.K."/>
            <person name="Heikamp-de Jong I."/>
            <person name="Jeffries A.C."/>
            <person name="Kozera C.J."/>
            <person name="Medina N."/>
            <person name="Peng X."/>
            <person name="Thi-Ngoc H.P."/>
            <person name="Redder P."/>
            <person name="Schenk M.E."/>
            <person name="Theriault C."/>
            <person name="Tolstrup N."/>
            <person name="Charlebois R.L."/>
            <person name="Doolittle W.F."/>
            <person name="Duguet M."/>
            <person name="Gaasterland T."/>
            <person name="Garrett R.A."/>
            <person name="Ragan M.A."/>
            <person name="Sensen C.W."/>
            <person name="Van der Oost J."/>
        </authorList>
    </citation>
    <scope>NUCLEOTIDE SEQUENCE [LARGE SCALE GENOMIC DNA]</scope>
    <source>
        <strain>ATCC 35092 / DSM 1617 / JCM 11322 / P2</strain>
    </source>
</reference>
<comment type="function">
    <text evidence="2">GTP hydrolase that promotes the GTP-dependent binding of aminoacyl-tRNA to the A-site of ribosomes during protein biosynthesis.</text>
</comment>
<comment type="catalytic activity">
    <reaction evidence="2">
        <text>GTP + H2O = GDP + phosphate + H(+)</text>
        <dbReference type="Rhea" id="RHEA:19669"/>
        <dbReference type="ChEBI" id="CHEBI:15377"/>
        <dbReference type="ChEBI" id="CHEBI:15378"/>
        <dbReference type="ChEBI" id="CHEBI:37565"/>
        <dbReference type="ChEBI" id="CHEBI:43474"/>
        <dbReference type="ChEBI" id="CHEBI:58189"/>
        <dbReference type="EC" id="3.6.5.3"/>
    </reaction>
    <physiologicalReaction direction="left-to-right" evidence="2">
        <dbReference type="Rhea" id="RHEA:19670"/>
    </physiologicalReaction>
</comment>
<comment type="subcellular location">
    <subcellularLocation>
        <location>Cytoplasm</location>
    </subcellularLocation>
</comment>
<comment type="similarity">
    <text evidence="2">Belongs to the TRAFAC class translation factor GTPase superfamily. Classic translation factor GTPase family. EF-Tu/EF-1A subfamily.</text>
</comment>
<proteinExistence type="evidence at protein level"/>
<gene>
    <name evidence="2" type="primary">tuf</name>
    <name type="synonym">tef1</name>
    <name type="ordered locus">SSO0216</name>
</gene>
<accession>P35021</accession>
<protein>
    <recommendedName>
        <fullName evidence="2">Elongation factor 1-alpha</fullName>
        <shortName evidence="2">EF-1-alpha</shortName>
        <ecNumber evidence="2">3.6.5.3</ecNumber>
    </recommendedName>
    <alternativeName>
        <fullName evidence="2">Elongation factor Tu</fullName>
        <shortName evidence="2">EF-Tu</shortName>
    </alternativeName>
</protein>